<protein>
    <recommendedName>
        <fullName evidence="1">Aspartate--tRNA ligase</fullName>
        <ecNumber evidence="1">6.1.1.12</ecNumber>
    </recommendedName>
    <alternativeName>
        <fullName evidence="1">Aspartyl-tRNA synthetase</fullName>
        <shortName evidence="1">AspRS</shortName>
    </alternativeName>
</protein>
<sequence length="599" mass="68248">MGEALNGLKRTMMCGEPREEHVGQKITLMGWVQRNRKLGGLDFIDLRDKTGIMQVVFGEEINSEAFEKAKSVRPEYCIAVTGEVVKRESVNENMPTGFVELKCESLKILSESETPPIYIKENLDAAENIRLKYRYLDLRRPDMHRIFEIRSKTTKSIRDYLEKNDFLDVETPMLTKSTPEGARDYLVPSRNYRGMFYALPQSPQIFKQLLMVSGFDKYYQIVKCFRDEDLRANRQPEFTQVDMELSFVEQDDIMALNEGLIAHVFKEVAGVDVKLPIKRMTFKDAMEKYGSDKPDLRFGMEITNITEDVKDMDFVVFKSAIEAGGSVRALCLKGGATLGRKPLDKLGEFVKTYKAKGLAWIQLKEDGVKSSIAKFLTDDVTNSIIETMGAETGDAILIVADKESVVFQSLGALRLELAKQFELIKDKNEFNFTWITEFPLFEYSEEEERYTACHHPFTAPMEEDLEFLESAPGKVRSKAYDLVLNGEELGGGSIRIHDMELQQRMFKALGFTEEQAWERFGFLLQAFKFGPPPHGGLAFGLDRMIMFLAGTENIKDVIAFPKNQNAYCYLSEAPNIADEKQLTELGIGILPKQEKQEQE</sequence>
<comment type="function">
    <text evidence="1">Catalyzes the attachment of L-aspartate to tRNA(Asp) in a two-step reaction: L-aspartate is first activated by ATP to form Asp-AMP and then transferred to the acceptor end of tRNA(Asp).</text>
</comment>
<comment type="catalytic activity">
    <reaction evidence="1">
        <text>tRNA(Asp) + L-aspartate + ATP = L-aspartyl-tRNA(Asp) + AMP + diphosphate</text>
        <dbReference type="Rhea" id="RHEA:19649"/>
        <dbReference type="Rhea" id="RHEA-COMP:9660"/>
        <dbReference type="Rhea" id="RHEA-COMP:9678"/>
        <dbReference type="ChEBI" id="CHEBI:29991"/>
        <dbReference type="ChEBI" id="CHEBI:30616"/>
        <dbReference type="ChEBI" id="CHEBI:33019"/>
        <dbReference type="ChEBI" id="CHEBI:78442"/>
        <dbReference type="ChEBI" id="CHEBI:78516"/>
        <dbReference type="ChEBI" id="CHEBI:456215"/>
        <dbReference type="EC" id="6.1.1.12"/>
    </reaction>
</comment>
<comment type="subunit">
    <text evidence="1">Homodimer.</text>
</comment>
<comment type="subcellular location">
    <subcellularLocation>
        <location evidence="1">Cytoplasm</location>
    </subcellularLocation>
</comment>
<comment type="similarity">
    <text evidence="1">Belongs to the class-II aminoacyl-tRNA synthetase family. Type 1 subfamily.</text>
</comment>
<accession>B2TN05</accession>
<reference key="1">
    <citation type="submission" date="2008-04" db="EMBL/GenBank/DDBJ databases">
        <title>Complete sequence of Clostridium botulinum strain Eklund.</title>
        <authorList>
            <person name="Brinkac L.M."/>
            <person name="Brown J.L."/>
            <person name="Bruce D."/>
            <person name="Detter C."/>
            <person name="Munk C."/>
            <person name="Smith L.A."/>
            <person name="Smith T.J."/>
            <person name="Sutton G."/>
            <person name="Brettin T.S."/>
        </authorList>
    </citation>
    <scope>NUCLEOTIDE SEQUENCE [LARGE SCALE GENOMIC DNA]</scope>
    <source>
        <strain>Eklund 17B / Type B</strain>
    </source>
</reference>
<gene>
    <name evidence="1" type="primary">aspS</name>
    <name type="ordered locus">CLL_A1036</name>
</gene>
<feature type="chain" id="PRO_1000090981" description="Aspartate--tRNA ligase">
    <location>
        <begin position="1"/>
        <end position="599"/>
    </location>
</feature>
<feature type="region of interest" description="Aspartate" evidence="1">
    <location>
        <begin position="204"/>
        <end position="207"/>
    </location>
</feature>
<feature type="binding site" evidence="1">
    <location>
        <position position="180"/>
    </location>
    <ligand>
        <name>L-aspartate</name>
        <dbReference type="ChEBI" id="CHEBI:29991"/>
    </ligand>
</feature>
<feature type="binding site" evidence="1">
    <location>
        <begin position="226"/>
        <end position="228"/>
    </location>
    <ligand>
        <name>ATP</name>
        <dbReference type="ChEBI" id="CHEBI:30616"/>
    </ligand>
</feature>
<feature type="binding site" evidence="1">
    <location>
        <position position="226"/>
    </location>
    <ligand>
        <name>L-aspartate</name>
        <dbReference type="ChEBI" id="CHEBI:29991"/>
    </ligand>
</feature>
<feature type="binding site" evidence="1">
    <location>
        <position position="235"/>
    </location>
    <ligand>
        <name>ATP</name>
        <dbReference type="ChEBI" id="CHEBI:30616"/>
    </ligand>
</feature>
<feature type="binding site" evidence="1">
    <location>
        <position position="454"/>
    </location>
    <ligand>
        <name>L-aspartate</name>
        <dbReference type="ChEBI" id="CHEBI:29991"/>
    </ligand>
</feature>
<feature type="binding site" evidence="1">
    <location>
        <position position="488"/>
    </location>
    <ligand>
        <name>ATP</name>
        <dbReference type="ChEBI" id="CHEBI:30616"/>
    </ligand>
</feature>
<feature type="binding site" evidence="1">
    <location>
        <position position="495"/>
    </location>
    <ligand>
        <name>L-aspartate</name>
        <dbReference type="ChEBI" id="CHEBI:29991"/>
    </ligand>
</feature>
<feature type="binding site" evidence="1">
    <location>
        <begin position="540"/>
        <end position="543"/>
    </location>
    <ligand>
        <name>ATP</name>
        <dbReference type="ChEBI" id="CHEBI:30616"/>
    </ligand>
</feature>
<evidence type="ECO:0000255" key="1">
    <source>
        <dbReference type="HAMAP-Rule" id="MF_00044"/>
    </source>
</evidence>
<dbReference type="EC" id="6.1.1.12" evidence="1"/>
<dbReference type="EMBL" id="CP001056">
    <property type="protein sequence ID" value="ACD23235.1"/>
    <property type="molecule type" value="Genomic_DNA"/>
</dbReference>
<dbReference type="SMR" id="B2TN05"/>
<dbReference type="KEGG" id="cbk:CLL_A1036"/>
<dbReference type="HOGENOM" id="CLU_014330_3_2_9"/>
<dbReference type="Proteomes" id="UP000001195">
    <property type="component" value="Chromosome"/>
</dbReference>
<dbReference type="GO" id="GO:0005737">
    <property type="term" value="C:cytoplasm"/>
    <property type="evidence" value="ECO:0007669"/>
    <property type="project" value="UniProtKB-SubCell"/>
</dbReference>
<dbReference type="GO" id="GO:0004815">
    <property type="term" value="F:aspartate-tRNA ligase activity"/>
    <property type="evidence" value="ECO:0007669"/>
    <property type="project" value="UniProtKB-UniRule"/>
</dbReference>
<dbReference type="GO" id="GO:0005524">
    <property type="term" value="F:ATP binding"/>
    <property type="evidence" value="ECO:0007669"/>
    <property type="project" value="UniProtKB-UniRule"/>
</dbReference>
<dbReference type="GO" id="GO:0140096">
    <property type="term" value="F:catalytic activity, acting on a protein"/>
    <property type="evidence" value="ECO:0007669"/>
    <property type="project" value="UniProtKB-ARBA"/>
</dbReference>
<dbReference type="GO" id="GO:0003676">
    <property type="term" value="F:nucleic acid binding"/>
    <property type="evidence" value="ECO:0007669"/>
    <property type="project" value="InterPro"/>
</dbReference>
<dbReference type="GO" id="GO:0016740">
    <property type="term" value="F:transferase activity"/>
    <property type="evidence" value="ECO:0007669"/>
    <property type="project" value="UniProtKB-ARBA"/>
</dbReference>
<dbReference type="GO" id="GO:0006422">
    <property type="term" value="P:aspartyl-tRNA aminoacylation"/>
    <property type="evidence" value="ECO:0007669"/>
    <property type="project" value="UniProtKB-UniRule"/>
</dbReference>
<dbReference type="CDD" id="cd00777">
    <property type="entry name" value="AspRS_core"/>
    <property type="match status" value="1"/>
</dbReference>
<dbReference type="CDD" id="cd04317">
    <property type="entry name" value="EcAspRS_like_N"/>
    <property type="match status" value="1"/>
</dbReference>
<dbReference type="Gene3D" id="3.30.930.10">
    <property type="entry name" value="Bira Bifunctional Protein, Domain 2"/>
    <property type="match status" value="1"/>
</dbReference>
<dbReference type="Gene3D" id="3.30.1360.30">
    <property type="entry name" value="GAD-like domain"/>
    <property type="match status" value="1"/>
</dbReference>
<dbReference type="Gene3D" id="2.40.50.140">
    <property type="entry name" value="Nucleic acid-binding proteins"/>
    <property type="match status" value="1"/>
</dbReference>
<dbReference type="HAMAP" id="MF_00044">
    <property type="entry name" value="Asp_tRNA_synth_type1"/>
    <property type="match status" value="1"/>
</dbReference>
<dbReference type="InterPro" id="IPR004364">
    <property type="entry name" value="Aa-tRNA-synt_II"/>
</dbReference>
<dbReference type="InterPro" id="IPR006195">
    <property type="entry name" value="aa-tRNA-synth_II"/>
</dbReference>
<dbReference type="InterPro" id="IPR045864">
    <property type="entry name" value="aa-tRNA-synth_II/BPL/LPL"/>
</dbReference>
<dbReference type="InterPro" id="IPR004524">
    <property type="entry name" value="Asp-tRNA-ligase_1"/>
</dbReference>
<dbReference type="InterPro" id="IPR047089">
    <property type="entry name" value="Asp-tRNA-ligase_1_N"/>
</dbReference>
<dbReference type="InterPro" id="IPR002312">
    <property type="entry name" value="Asp/Asn-tRNA-synth_IIb"/>
</dbReference>
<dbReference type="InterPro" id="IPR047090">
    <property type="entry name" value="AspRS_core"/>
</dbReference>
<dbReference type="InterPro" id="IPR004115">
    <property type="entry name" value="GAD-like_sf"/>
</dbReference>
<dbReference type="InterPro" id="IPR029351">
    <property type="entry name" value="GAD_dom"/>
</dbReference>
<dbReference type="InterPro" id="IPR012340">
    <property type="entry name" value="NA-bd_OB-fold"/>
</dbReference>
<dbReference type="InterPro" id="IPR004365">
    <property type="entry name" value="NA-bd_OB_tRNA"/>
</dbReference>
<dbReference type="NCBIfam" id="TIGR00459">
    <property type="entry name" value="aspS_bact"/>
    <property type="match status" value="1"/>
</dbReference>
<dbReference type="NCBIfam" id="NF001750">
    <property type="entry name" value="PRK00476.1"/>
    <property type="match status" value="1"/>
</dbReference>
<dbReference type="PANTHER" id="PTHR22594:SF5">
    <property type="entry name" value="ASPARTATE--TRNA LIGASE, MITOCHONDRIAL"/>
    <property type="match status" value="1"/>
</dbReference>
<dbReference type="PANTHER" id="PTHR22594">
    <property type="entry name" value="ASPARTYL/LYSYL-TRNA SYNTHETASE"/>
    <property type="match status" value="1"/>
</dbReference>
<dbReference type="Pfam" id="PF02938">
    <property type="entry name" value="GAD"/>
    <property type="match status" value="1"/>
</dbReference>
<dbReference type="Pfam" id="PF00152">
    <property type="entry name" value="tRNA-synt_2"/>
    <property type="match status" value="1"/>
</dbReference>
<dbReference type="Pfam" id="PF01336">
    <property type="entry name" value="tRNA_anti-codon"/>
    <property type="match status" value="1"/>
</dbReference>
<dbReference type="PRINTS" id="PR01042">
    <property type="entry name" value="TRNASYNTHASP"/>
</dbReference>
<dbReference type="SUPFAM" id="SSF55681">
    <property type="entry name" value="Class II aaRS and biotin synthetases"/>
    <property type="match status" value="1"/>
</dbReference>
<dbReference type="SUPFAM" id="SSF55261">
    <property type="entry name" value="GAD domain-like"/>
    <property type="match status" value="1"/>
</dbReference>
<dbReference type="SUPFAM" id="SSF50249">
    <property type="entry name" value="Nucleic acid-binding proteins"/>
    <property type="match status" value="1"/>
</dbReference>
<dbReference type="PROSITE" id="PS50862">
    <property type="entry name" value="AA_TRNA_LIGASE_II"/>
    <property type="match status" value="1"/>
</dbReference>
<keyword id="KW-0030">Aminoacyl-tRNA synthetase</keyword>
<keyword id="KW-0067">ATP-binding</keyword>
<keyword id="KW-0963">Cytoplasm</keyword>
<keyword id="KW-0436">Ligase</keyword>
<keyword id="KW-0547">Nucleotide-binding</keyword>
<keyword id="KW-0648">Protein biosynthesis</keyword>
<organism>
    <name type="scientific">Clostridium botulinum (strain Eklund 17B / Type B)</name>
    <dbReference type="NCBI Taxonomy" id="935198"/>
    <lineage>
        <taxon>Bacteria</taxon>
        <taxon>Bacillati</taxon>
        <taxon>Bacillota</taxon>
        <taxon>Clostridia</taxon>
        <taxon>Eubacteriales</taxon>
        <taxon>Clostridiaceae</taxon>
        <taxon>Clostridium</taxon>
    </lineage>
</organism>
<name>SYD_CLOBB</name>
<proteinExistence type="inferred from homology"/>